<reference key="1">
    <citation type="journal article" date="2005" name="PLoS Biol.">
        <title>The Wolbachia genome of Brugia malayi: endosymbiont evolution within a human pathogenic nematode.</title>
        <authorList>
            <person name="Foster J."/>
            <person name="Ganatra M."/>
            <person name="Kamal I."/>
            <person name="Ware J."/>
            <person name="Makarova K."/>
            <person name="Ivanova N."/>
            <person name="Bhattacharyya A."/>
            <person name="Kapatral V."/>
            <person name="Kumar S."/>
            <person name="Posfai J."/>
            <person name="Vincze T."/>
            <person name="Ingram J."/>
            <person name="Moran L."/>
            <person name="Lapidus A."/>
            <person name="Omelchenko M."/>
            <person name="Kyrpides N."/>
            <person name="Ghedin E."/>
            <person name="Wang S."/>
            <person name="Goltsman E."/>
            <person name="Joukov V."/>
            <person name="Ostrovskaya O."/>
            <person name="Tsukerman K."/>
            <person name="Mazur M."/>
            <person name="Comb D."/>
            <person name="Koonin E."/>
            <person name="Slatko B."/>
        </authorList>
    </citation>
    <scope>NUCLEOTIDE SEQUENCE [LARGE SCALE GENOMIC DNA]</scope>
    <source>
        <strain>TRS</strain>
    </source>
</reference>
<organism>
    <name type="scientific">Wolbachia sp. subsp. Brugia malayi (strain TRS)</name>
    <dbReference type="NCBI Taxonomy" id="292805"/>
    <lineage>
        <taxon>Bacteria</taxon>
        <taxon>Pseudomonadati</taxon>
        <taxon>Pseudomonadota</taxon>
        <taxon>Alphaproteobacteria</taxon>
        <taxon>Rickettsiales</taxon>
        <taxon>Anaplasmataceae</taxon>
        <taxon>Wolbachieae</taxon>
        <taxon>Wolbachia</taxon>
    </lineage>
</organism>
<name>LIPA_WOLTR</name>
<feature type="chain" id="PRO_1000012296" description="Lipoyl synthase">
    <location>
        <begin position="1"/>
        <end position="287"/>
    </location>
</feature>
<feature type="domain" description="Radical SAM core" evidence="2">
    <location>
        <begin position="46"/>
        <end position="262"/>
    </location>
</feature>
<feature type="binding site" evidence="1">
    <location>
        <position position="34"/>
    </location>
    <ligand>
        <name>[4Fe-4S] cluster</name>
        <dbReference type="ChEBI" id="CHEBI:49883"/>
        <label>1</label>
    </ligand>
</feature>
<feature type="binding site" evidence="1">
    <location>
        <position position="39"/>
    </location>
    <ligand>
        <name>[4Fe-4S] cluster</name>
        <dbReference type="ChEBI" id="CHEBI:49883"/>
        <label>1</label>
    </ligand>
</feature>
<feature type="binding site" evidence="1">
    <location>
        <position position="45"/>
    </location>
    <ligand>
        <name>[4Fe-4S] cluster</name>
        <dbReference type="ChEBI" id="CHEBI:49883"/>
        <label>1</label>
    </ligand>
</feature>
<feature type="binding site" evidence="1">
    <location>
        <position position="60"/>
    </location>
    <ligand>
        <name>[4Fe-4S] cluster</name>
        <dbReference type="ChEBI" id="CHEBI:49883"/>
        <label>2</label>
        <note>4Fe-4S-S-AdoMet</note>
    </ligand>
</feature>
<feature type="binding site" evidence="1">
    <location>
        <position position="64"/>
    </location>
    <ligand>
        <name>[4Fe-4S] cluster</name>
        <dbReference type="ChEBI" id="CHEBI:49883"/>
        <label>2</label>
        <note>4Fe-4S-S-AdoMet</note>
    </ligand>
</feature>
<feature type="binding site" evidence="1">
    <location>
        <position position="67"/>
    </location>
    <ligand>
        <name>[4Fe-4S] cluster</name>
        <dbReference type="ChEBI" id="CHEBI:49883"/>
        <label>2</label>
        <note>4Fe-4S-S-AdoMet</note>
    </ligand>
</feature>
<feature type="binding site" evidence="1">
    <location>
        <position position="273"/>
    </location>
    <ligand>
        <name>[4Fe-4S] cluster</name>
        <dbReference type="ChEBI" id="CHEBI:49883"/>
        <label>1</label>
    </ligand>
</feature>
<proteinExistence type="inferred from homology"/>
<dbReference type="EC" id="2.8.1.8" evidence="1"/>
<dbReference type="EMBL" id="AE017321">
    <property type="protein sequence ID" value="AAW70892.1"/>
    <property type="molecule type" value="Genomic_DNA"/>
</dbReference>
<dbReference type="RefSeq" id="WP_011256502.1">
    <property type="nucleotide sequence ID" value="NC_006833.1"/>
</dbReference>
<dbReference type="SMR" id="Q5GSY2"/>
<dbReference type="STRING" id="292805.Wbm0303"/>
<dbReference type="KEGG" id="wbm:Wbm0303"/>
<dbReference type="eggNOG" id="COG0320">
    <property type="taxonomic scope" value="Bacteria"/>
</dbReference>
<dbReference type="HOGENOM" id="CLU_033144_2_1_5"/>
<dbReference type="UniPathway" id="UPA00538">
    <property type="reaction ID" value="UER00593"/>
</dbReference>
<dbReference type="Proteomes" id="UP000000534">
    <property type="component" value="Chromosome"/>
</dbReference>
<dbReference type="GO" id="GO:0005737">
    <property type="term" value="C:cytoplasm"/>
    <property type="evidence" value="ECO:0007669"/>
    <property type="project" value="UniProtKB-SubCell"/>
</dbReference>
<dbReference type="GO" id="GO:0051539">
    <property type="term" value="F:4 iron, 4 sulfur cluster binding"/>
    <property type="evidence" value="ECO:0007669"/>
    <property type="project" value="UniProtKB-UniRule"/>
</dbReference>
<dbReference type="GO" id="GO:0016992">
    <property type="term" value="F:lipoate synthase activity"/>
    <property type="evidence" value="ECO:0007669"/>
    <property type="project" value="UniProtKB-UniRule"/>
</dbReference>
<dbReference type="GO" id="GO:0046872">
    <property type="term" value="F:metal ion binding"/>
    <property type="evidence" value="ECO:0007669"/>
    <property type="project" value="UniProtKB-KW"/>
</dbReference>
<dbReference type="CDD" id="cd01335">
    <property type="entry name" value="Radical_SAM"/>
    <property type="match status" value="1"/>
</dbReference>
<dbReference type="FunFam" id="3.20.20.70:FF:000040">
    <property type="entry name" value="Lipoyl synthase"/>
    <property type="match status" value="1"/>
</dbReference>
<dbReference type="Gene3D" id="3.20.20.70">
    <property type="entry name" value="Aldolase class I"/>
    <property type="match status" value="1"/>
</dbReference>
<dbReference type="HAMAP" id="MF_00206">
    <property type="entry name" value="Lipoyl_synth"/>
    <property type="match status" value="1"/>
</dbReference>
<dbReference type="InterPro" id="IPR013785">
    <property type="entry name" value="Aldolase_TIM"/>
</dbReference>
<dbReference type="InterPro" id="IPR006638">
    <property type="entry name" value="Elp3/MiaA/NifB-like_rSAM"/>
</dbReference>
<dbReference type="InterPro" id="IPR031691">
    <property type="entry name" value="LIAS_N"/>
</dbReference>
<dbReference type="InterPro" id="IPR003698">
    <property type="entry name" value="Lipoyl_synth"/>
</dbReference>
<dbReference type="InterPro" id="IPR007197">
    <property type="entry name" value="rSAM"/>
</dbReference>
<dbReference type="NCBIfam" id="TIGR00510">
    <property type="entry name" value="lipA"/>
    <property type="match status" value="1"/>
</dbReference>
<dbReference type="NCBIfam" id="NF004019">
    <property type="entry name" value="PRK05481.1"/>
    <property type="match status" value="1"/>
</dbReference>
<dbReference type="NCBIfam" id="NF009544">
    <property type="entry name" value="PRK12928.1"/>
    <property type="match status" value="1"/>
</dbReference>
<dbReference type="PANTHER" id="PTHR10949">
    <property type="entry name" value="LIPOYL SYNTHASE"/>
    <property type="match status" value="1"/>
</dbReference>
<dbReference type="PANTHER" id="PTHR10949:SF0">
    <property type="entry name" value="LIPOYL SYNTHASE, MITOCHONDRIAL"/>
    <property type="match status" value="1"/>
</dbReference>
<dbReference type="Pfam" id="PF16881">
    <property type="entry name" value="LIAS_N"/>
    <property type="match status" value="1"/>
</dbReference>
<dbReference type="Pfam" id="PF04055">
    <property type="entry name" value="Radical_SAM"/>
    <property type="match status" value="1"/>
</dbReference>
<dbReference type="PIRSF" id="PIRSF005963">
    <property type="entry name" value="Lipoyl_synth"/>
    <property type="match status" value="1"/>
</dbReference>
<dbReference type="SFLD" id="SFLDF00271">
    <property type="entry name" value="lipoyl_synthase"/>
    <property type="match status" value="1"/>
</dbReference>
<dbReference type="SFLD" id="SFLDS00029">
    <property type="entry name" value="Radical_SAM"/>
    <property type="match status" value="1"/>
</dbReference>
<dbReference type="SMART" id="SM00729">
    <property type="entry name" value="Elp3"/>
    <property type="match status" value="1"/>
</dbReference>
<dbReference type="SUPFAM" id="SSF102114">
    <property type="entry name" value="Radical SAM enzymes"/>
    <property type="match status" value="1"/>
</dbReference>
<dbReference type="PROSITE" id="PS51918">
    <property type="entry name" value="RADICAL_SAM"/>
    <property type="match status" value="1"/>
</dbReference>
<evidence type="ECO:0000255" key="1">
    <source>
        <dbReference type="HAMAP-Rule" id="MF_00206"/>
    </source>
</evidence>
<evidence type="ECO:0000255" key="2">
    <source>
        <dbReference type="PROSITE-ProRule" id="PRU01266"/>
    </source>
</evidence>
<gene>
    <name evidence="1" type="primary">lipA</name>
    <name type="ordered locus">Wbm0303</name>
</gene>
<protein>
    <recommendedName>
        <fullName evidence="1">Lipoyl synthase</fullName>
        <ecNumber evidence="1">2.8.1.8</ecNumber>
    </recommendedName>
    <alternativeName>
        <fullName evidence="1">Lip-syn</fullName>
        <shortName evidence="1">LS</shortName>
    </alternativeName>
    <alternativeName>
        <fullName evidence="1">Lipoate synthase</fullName>
    </alternativeName>
    <alternativeName>
        <fullName evidence="1">Lipoic acid synthase</fullName>
    </alternativeName>
    <alternativeName>
        <fullName evidence="1">Sulfur insertion protein LipA</fullName>
    </alternativeName>
</protein>
<sequence length="287" mass="32429">MHSKPPWLRAKAPTGEIFNETLNTVKLHGLHTVCEEAACPNIGECWNKRHATVMILGSVCTRACAFCNVATGIPNKLDPHEPENLAKAIKKLNLKYVVITSVDRDDLPDGGASQFIKCIEEIRKITPETTVEILTPDFLNKKGAFEAIAVASPDVYNHNIEMVPRLYARIRPRARYFHSLYLLKMVKQINPKLLTKSGLMVGLGETKEEVLQVMDDLRSAEVDFITIGQYLQPTPKHAKIDRYVTPEEFEHYKYIAYSKGFLVVASSPLTRSSYHAEEDFNRLKACR</sequence>
<keyword id="KW-0004">4Fe-4S</keyword>
<keyword id="KW-0963">Cytoplasm</keyword>
<keyword id="KW-0408">Iron</keyword>
<keyword id="KW-0411">Iron-sulfur</keyword>
<keyword id="KW-0479">Metal-binding</keyword>
<keyword id="KW-1185">Reference proteome</keyword>
<keyword id="KW-0949">S-adenosyl-L-methionine</keyword>
<keyword id="KW-0808">Transferase</keyword>
<accession>Q5GSY2</accession>
<comment type="function">
    <text evidence="1">Catalyzes the radical-mediated insertion of two sulfur atoms into the C-6 and C-8 positions of the octanoyl moiety bound to the lipoyl domains of lipoate-dependent enzymes, thereby converting the octanoylated domains into lipoylated derivatives.</text>
</comment>
<comment type="catalytic activity">
    <reaction evidence="1">
        <text>[[Fe-S] cluster scaffold protein carrying a second [4Fe-4S](2+) cluster] + N(6)-octanoyl-L-lysyl-[protein] + 2 oxidized [2Fe-2S]-[ferredoxin] + 2 S-adenosyl-L-methionine + 4 H(+) = [[Fe-S] cluster scaffold protein] + N(6)-[(R)-dihydrolipoyl]-L-lysyl-[protein] + 4 Fe(3+) + 2 hydrogen sulfide + 2 5'-deoxyadenosine + 2 L-methionine + 2 reduced [2Fe-2S]-[ferredoxin]</text>
        <dbReference type="Rhea" id="RHEA:16585"/>
        <dbReference type="Rhea" id="RHEA-COMP:9928"/>
        <dbReference type="Rhea" id="RHEA-COMP:10000"/>
        <dbReference type="Rhea" id="RHEA-COMP:10001"/>
        <dbReference type="Rhea" id="RHEA-COMP:10475"/>
        <dbReference type="Rhea" id="RHEA-COMP:14568"/>
        <dbReference type="Rhea" id="RHEA-COMP:14569"/>
        <dbReference type="ChEBI" id="CHEBI:15378"/>
        <dbReference type="ChEBI" id="CHEBI:17319"/>
        <dbReference type="ChEBI" id="CHEBI:29034"/>
        <dbReference type="ChEBI" id="CHEBI:29919"/>
        <dbReference type="ChEBI" id="CHEBI:33722"/>
        <dbReference type="ChEBI" id="CHEBI:33737"/>
        <dbReference type="ChEBI" id="CHEBI:33738"/>
        <dbReference type="ChEBI" id="CHEBI:57844"/>
        <dbReference type="ChEBI" id="CHEBI:59789"/>
        <dbReference type="ChEBI" id="CHEBI:78809"/>
        <dbReference type="ChEBI" id="CHEBI:83100"/>
        <dbReference type="EC" id="2.8.1.8"/>
    </reaction>
</comment>
<comment type="cofactor">
    <cofactor evidence="1">
        <name>[4Fe-4S] cluster</name>
        <dbReference type="ChEBI" id="CHEBI:49883"/>
    </cofactor>
    <text evidence="1">Binds 2 [4Fe-4S] clusters per subunit. One cluster is coordinated with 3 cysteines and an exchangeable S-adenosyl-L-methionine.</text>
</comment>
<comment type="pathway">
    <text evidence="1">Protein modification; protein lipoylation via endogenous pathway; protein N(6)-(lipoyl)lysine from octanoyl-[acyl-carrier-protein]: step 2/2.</text>
</comment>
<comment type="subcellular location">
    <subcellularLocation>
        <location evidence="1">Cytoplasm</location>
    </subcellularLocation>
</comment>
<comment type="similarity">
    <text evidence="1">Belongs to the radical SAM superfamily. Lipoyl synthase family.</text>
</comment>